<feature type="signal peptide" evidence="2">
    <location>
        <begin position="1"/>
        <end position="27"/>
    </location>
</feature>
<feature type="propeptide" id="PRO_0000035011" evidence="7">
    <location>
        <begin position="28"/>
        <end position="58"/>
    </location>
</feature>
<feature type="peptide" id="PRO_0000035012" description="Conotoxin tx9a" evidence="3 4">
    <location>
        <begin position="61"/>
        <end position="87"/>
    </location>
</feature>
<feature type="modified residue" description="4-carboxyglutamate; partial" evidence="3 5">
    <location>
        <position position="68"/>
    </location>
</feature>
<feature type="modified residue" description="4-carboxyglutamate; partial" evidence="3 5">
    <location>
        <position position="73"/>
    </location>
</feature>
<feature type="modified residue" description="Asparagine amide" evidence="3 4 5">
    <location>
        <position position="87"/>
    </location>
</feature>
<feature type="disulfide bond" evidence="1">
    <location>
        <begin position="62"/>
        <end position="76"/>
    </location>
</feature>
<feature type="disulfide bond" evidence="1">
    <location>
        <begin position="66"/>
        <end position="78"/>
    </location>
</feature>
<feature type="disulfide bond" evidence="1">
    <location>
        <begin position="72"/>
        <end position="83"/>
    </location>
</feature>
<proteinExistence type="evidence at protein level"/>
<organism>
    <name type="scientific">Conus textile</name>
    <name type="common">Cloth-of-gold cone</name>
    <dbReference type="NCBI Taxonomy" id="6494"/>
    <lineage>
        <taxon>Eukaryota</taxon>
        <taxon>Metazoa</taxon>
        <taxon>Spiralia</taxon>
        <taxon>Lophotrochozoa</taxon>
        <taxon>Mollusca</taxon>
        <taxon>Gastropoda</taxon>
        <taxon>Caenogastropoda</taxon>
        <taxon>Neogastropoda</taxon>
        <taxon>Conoidea</taxon>
        <taxon>Conidae</taxon>
        <taxon>Conus</taxon>
        <taxon>Cylinder</taxon>
    </lineage>
</organism>
<comment type="function">
    <text evidence="3">Neurotoxin. In vivo, intracranial injection into mice of 10 pmol/g of the peptide induces running in circles and hyperactivity. At higher doses (50 pmol/g), the mice exhibit running and climbing symptoms for close to one hour. Between 130 and 150 pmol/g, characteristic 'spasmodic' symptomatology is elicited. A hand clap would make mice jump high and start running rapidly. When exposed to a loud hand clap, or if the cage cover were dropped, the mice lose motor control and exhibit seizure-like symptoms from which they eventually recover. At the highest doses tested (over 250 pmol/g), after the characteristic spasmodic symptomatology, lethality occurs. Injection of a similar dose range intramuscularly into Siamese fighting fish elicited no unusual symptomatology.</text>
</comment>
<comment type="subcellular location">
    <subcellularLocation>
        <location evidence="4">Secreted</location>
    </subcellularLocation>
</comment>
<comment type="tissue specificity">
    <text evidence="8 9">Expressed by the venom duct. All different gamma-carboxyalted forms are mostly present in part 2, part 3 and part 4 of the venom duct. They are also found in part 1 (proximal part near the venom bulb) and part 5, but in lower quantity.</text>
</comment>
<comment type="domain">
    <text evidence="7">The cysteine framework is IX (C-C-C-C-C-C).</text>
</comment>
<comment type="PTM">
    <text evidence="5">Exists in 4 different forms, depending on gamma-carboxyglutamations. Tx9a-EE does not contain gamma-carboxyglutamate, tx9a-E/gamma has one gamma-carboxyglutamate at position 73, tx9a-gamma/E has one gamma-carboxyglutamate at position 68, and tx9a-agmma/gamma has two gamma-carboxyglutamates at positions 68 and 73.</text>
</comment>
<comment type="mass spectrometry"/>
<comment type="mass spectrometry"/>
<comment type="similarity">
    <text evidence="7">Belongs to the conotoxin P superfamily.</text>
</comment>
<name>CP9A_CONTE</name>
<sequence>MHLSLARSAVLMLLLLFALGNFVVVQSGQITRDVDNGQLTDNRRNLQSKWKPVSLYMSRRGCNNSCQEHSDCESHCICTFRGCGAVNG</sequence>
<keyword id="KW-0027">Amidation</keyword>
<keyword id="KW-0165">Cleavage on pair of basic residues</keyword>
<keyword id="KW-0903">Direct protein sequencing</keyword>
<keyword id="KW-1015">Disulfide bond</keyword>
<keyword id="KW-0301">Gamma-carboxyglutamic acid</keyword>
<keyword id="KW-0528">Neurotoxin</keyword>
<keyword id="KW-0964">Secreted</keyword>
<keyword id="KW-0732">Signal</keyword>
<keyword id="KW-0800">Toxin</keyword>
<protein>
    <recommendedName>
        <fullName evidence="6">Conotoxin tx9a</fullName>
    </recommendedName>
    <alternativeName>
        <fullName evidence="6">Spasmodic peptide</fullName>
    </alternativeName>
</protein>
<reference key="1">
    <citation type="journal article" date="2000" name="Biochemistry">
        <title>The spasmodic peptide defines a new conotoxin superfamily.</title>
        <authorList>
            <person name="Lirazan M.B."/>
            <person name="Hooper D."/>
            <person name="Corpuz G.P."/>
            <person name="Ramilo C.A."/>
            <person name="Bandyopadhyay P."/>
            <person name="Cruz L.J."/>
            <person name="Olivera B.M."/>
        </authorList>
    </citation>
    <scope>NUCLEOTIDE SEQUENCE [MRNA]</scope>
    <scope>PROTEIN SEQUENCE OF 61-87</scope>
    <scope>GAMMA-CARBOXYGLUTAMATION AT GLU-68 AND GLU-73</scope>
    <scope>AMIDATION AT ASN-87</scope>
    <scope>MASS SPECTROMETRY</scope>
    <scope>BIOASSAY</scope>
    <scope>FUNCTION</scope>
    <source>
        <tissue>Venom</tissue>
    </source>
</reference>
<reference key="2">
    <citation type="journal article" date="2009" name="Proc. Natl. Acad. Sci. U.S.A.">
        <title>Rapid sensitive analysis of cysteine rich peptide venom components.</title>
        <authorList>
            <person name="Ueberheide B.M."/>
            <person name="Fenyo D."/>
            <person name="Alewood P.F."/>
            <person name="Chait B.T."/>
        </authorList>
    </citation>
    <scope>PROTEIN SEQUENCE OF 61-87</scope>
    <scope>SUBCELLULAR LOCATION</scope>
    <scope>MASS SPECTROMETRY</scope>
    <scope>AMIDATION AT ASN-87</scope>
    <source>
        <tissue>Venom</tissue>
    </source>
</reference>
<reference key="3">
    <citation type="journal article" date="2012" name="Toxicon">
        <title>Secretion and maturation of conotoxins in the venom ducts of Conus textile.</title>
        <authorList>
            <person name="Dobson R."/>
            <person name="Collodoro M."/>
            <person name="Gilles N."/>
            <person name="Turtoi A."/>
            <person name="De Pauw E."/>
            <person name="Quinton L."/>
        </authorList>
    </citation>
    <scope>IDENTIFICATION BY MASS SPECTROMETRY</scope>
    <scope>TISSUE SPECIFICITY</scope>
    <scope>POSITION IN VENOM DUCT</scope>
    <scope>GAMMA-CARBOXYGLUTAMATION AT GLU-68 AND GLU-73</scope>
    <scope>AMIDATION AT ASN-87</scope>
    <source>
        <tissue>Venom</tissue>
    </source>
</reference>
<evidence type="ECO:0000250" key="1">
    <source>
        <dbReference type="UniProtKB" id="Q9GU57"/>
    </source>
</evidence>
<evidence type="ECO:0000255" key="2"/>
<evidence type="ECO:0000269" key="3">
    <source>
    </source>
</evidence>
<evidence type="ECO:0000269" key="4">
    <source>
    </source>
</evidence>
<evidence type="ECO:0000269" key="5">
    <source>
    </source>
</evidence>
<evidence type="ECO:0000303" key="6">
    <source>
    </source>
</evidence>
<evidence type="ECO:0000305" key="7"/>
<evidence type="ECO:0000305" key="8">
    <source>
    </source>
</evidence>
<evidence type="ECO:0000305" key="9">
    <source>
    </source>
</evidence>
<dbReference type="EMBL" id="AF193510">
    <property type="protein sequence ID" value="AAG28406.1"/>
    <property type="molecule type" value="mRNA"/>
</dbReference>
<dbReference type="SMR" id="Q9GU58"/>
<dbReference type="ConoServer" id="608">
    <property type="toxin name" value="TxIXA precursor"/>
</dbReference>
<dbReference type="GO" id="GO:0005576">
    <property type="term" value="C:extracellular region"/>
    <property type="evidence" value="ECO:0007669"/>
    <property type="project" value="UniProtKB-SubCell"/>
</dbReference>
<dbReference type="GO" id="GO:0090729">
    <property type="term" value="F:toxin activity"/>
    <property type="evidence" value="ECO:0007669"/>
    <property type="project" value="UniProtKB-KW"/>
</dbReference>
<dbReference type="InterPro" id="IPR010012">
    <property type="entry name" value="Toxin_11"/>
</dbReference>
<dbReference type="Pfam" id="PF07473">
    <property type="entry name" value="Toxin_11"/>
    <property type="match status" value="1"/>
</dbReference>
<dbReference type="SUPFAM" id="SSF57059">
    <property type="entry name" value="omega toxin-like"/>
    <property type="match status" value="1"/>
</dbReference>
<accession>Q9GU58</accession>